<accession>B1IPL0</accession>
<protein>
    <recommendedName>
        <fullName evidence="1">Translation initiation factor IF-3</fullName>
    </recommendedName>
</protein>
<keyword id="KW-0963">Cytoplasm</keyword>
<keyword id="KW-0396">Initiation factor</keyword>
<keyword id="KW-0648">Protein biosynthesis</keyword>
<sequence length="180" mass="20564">MKGGKRVQTARPNRINGEIRAQEVRLTGLEGEQLGIVSLREALEKAEEAGVDLVEISPNAEPPVCRIMDYGKFLYEKSKSSKEQKKKQKVIQVKEIKFRPGTDEGDYQVKLRSLIRFLEEGDKAKITLRFRGREMAHQQIGMEVLNRVKDDLQELAVVESFPTKIEGRQMIMVLAPKKKQ</sequence>
<comment type="function">
    <text evidence="1">IF-3 binds to the 30S ribosomal subunit and shifts the equilibrium between 70S ribosomes and their 50S and 30S subunits in favor of the free subunits, thus enhancing the availability of 30S subunits on which protein synthesis initiation begins.</text>
</comment>
<comment type="subunit">
    <text evidence="1">Monomer.</text>
</comment>
<comment type="subcellular location">
    <subcellularLocation>
        <location evidence="1">Cytoplasm</location>
    </subcellularLocation>
</comment>
<comment type="similarity">
    <text evidence="1">Belongs to the IF-3 family.</text>
</comment>
<proteinExistence type="inferred from homology"/>
<name>IF3_ECOLC</name>
<organism>
    <name type="scientific">Escherichia coli (strain ATCC 8739 / DSM 1576 / NBRC 3972 / NCIMB 8545 / WDCM 00012 / Crooks)</name>
    <dbReference type="NCBI Taxonomy" id="481805"/>
    <lineage>
        <taxon>Bacteria</taxon>
        <taxon>Pseudomonadati</taxon>
        <taxon>Pseudomonadota</taxon>
        <taxon>Gammaproteobacteria</taxon>
        <taxon>Enterobacterales</taxon>
        <taxon>Enterobacteriaceae</taxon>
        <taxon>Escherichia</taxon>
    </lineage>
</organism>
<feature type="chain" id="PRO_1000075271" description="Translation initiation factor IF-3">
    <location>
        <begin position="1"/>
        <end position="180"/>
    </location>
</feature>
<gene>
    <name evidence="1" type="primary">infC</name>
    <name type="ordered locus">EcolC_1914</name>
</gene>
<reference key="1">
    <citation type="submission" date="2008-02" db="EMBL/GenBank/DDBJ databases">
        <title>Complete sequence of Escherichia coli C str. ATCC 8739.</title>
        <authorList>
            <person name="Copeland A."/>
            <person name="Lucas S."/>
            <person name="Lapidus A."/>
            <person name="Glavina del Rio T."/>
            <person name="Dalin E."/>
            <person name="Tice H."/>
            <person name="Bruce D."/>
            <person name="Goodwin L."/>
            <person name="Pitluck S."/>
            <person name="Kiss H."/>
            <person name="Brettin T."/>
            <person name="Detter J.C."/>
            <person name="Han C."/>
            <person name="Kuske C.R."/>
            <person name="Schmutz J."/>
            <person name="Larimer F."/>
            <person name="Land M."/>
            <person name="Hauser L."/>
            <person name="Kyrpides N."/>
            <person name="Mikhailova N."/>
            <person name="Ingram L."/>
            <person name="Richardson P."/>
        </authorList>
    </citation>
    <scope>NUCLEOTIDE SEQUENCE [LARGE SCALE GENOMIC DNA]</scope>
    <source>
        <strain>ATCC 8739 / DSM 1576 / NBRC 3972 / NCIMB 8545 / WDCM 00012 / Crooks</strain>
    </source>
</reference>
<dbReference type="EMBL" id="CP000946">
    <property type="protein sequence ID" value="ACA77560.1"/>
    <property type="molecule type" value="Genomic_DNA"/>
</dbReference>
<dbReference type="RefSeq" id="WP_001700733.1">
    <property type="nucleotide sequence ID" value="NZ_MTFT01000006.1"/>
</dbReference>
<dbReference type="BMRB" id="B1IPL0"/>
<dbReference type="SMR" id="B1IPL0"/>
<dbReference type="GeneID" id="93775931"/>
<dbReference type="KEGG" id="ecl:EcolC_1914"/>
<dbReference type="HOGENOM" id="CLU_054919_3_2_6"/>
<dbReference type="GO" id="GO:0005829">
    <property type="term" value="C:cytosol"/>
    <property type="evidence" value="ECO:0007669"/>
    <property type="project" value="TreeGrafter"/>
</dbReference>
<dbReference type="GO" id="GO:0016020">
    <property type="term" value="C:membrane"/>
    <property type="evidence" value="ECO:0007669"/>
    <property type="project" value="TreeGrafter"/>
</dbReference>
<dbReference type="GO" id="GO:0043022">
    <property type="term" value="F:ribosome binding"/>
    <property type="evidence" value="ECO:0007669"/>
    <property type="project" value="TreeGrafter"/>
</dbReference>
<dbReference type="GO" id="GO:0003743">
    <property type="term" value="F:translation initiation factor activity"/>
    <property type="evidence" value="ECO:0007669"/>
    <property type="project" value="UniProtKB-UniRule"/>
</dbReference>
<dbReference type="GO" id="GO:0032790">
    <property type="term" value="P:ribosome disassembly"/>
    <property type="evidence" value="ECO:0007669"/>
    <property type="project" value="TreeGrafter"/>
</dbReference>
<dbReference type="FunFam" id="3.10.20.80:FF:000001">
    <property type="entry name" value="Translation initiation factor IF-3"/>
    <property type="match status" value="1"/>
</dbReference>
<dbReference type="FunFam" id="3.30.110.10:FF:000001">
    <property type="entry name" value="Translation initiation factor IF-3"/>
    <property type="match status" value="1"/>
</dbReference>
<dbReference type="Gene3D" id="3.30.110.10">
    <property type="entry name" value="Translation initiation factor 3 (IF-3), C-terminal domain"/>
    <property type="match status" value="1"/>
</dbReference>
<dbReference type="Gene3D" id="3.10.20.80">
    <property type="entry name" value="Translation initiation factor 3 (IF-3), N-terminal domain"/>
    <property type="match status" value="1"/>
</dbReference>
<dbReference type="HAMAP" id="MF_00080">
    <property type="entry name" value="IF_3"/>
    <property type="match status" value="1"/>
</dbReference>
<dbReference type="InterPro" id="IPR036788">
    <property type="entry name" value="T_IF-3_C_sf"/>
</dbReference>
<dbReference type="InterPro" id="IPR036787">
    <property type="entry name" value="T_IF-3_N_sf"/>
</dbReference>
<dbReference type="InterPro" id="IPR019813">
    <property type="entry name" value="Translation_initiation_fac3_CS"/>
</dbReference>
<dbReference type="InterPro" id="IPR001288">
    <property type="entry name" value="Translation_initiation_fac_3"/>
</dbReference>
<dbReference type="InterPro" id="IPR019815">
    <property type="entry name" value="Translation_initiation_fac_3_C"/>
</dbReference>
<dbReference type="InterPro" id="IPR019814">
    <property type="entry name" value="Translation_initiation_fac_3_N"/>
</dbReference>
<dbReference type="NCBIfam" id="TIGR00168">
    <property type="entry name" value="infC"/>
    <property type="match status" value="1"/>
</dbReference>
<dbReference type="PANTHER" id="PTHR10938">
    <property type="entry name" value="TRANSLATION INITIATION FACTOR IF-3"/>
    <property type="match status" value="1"/>
</dbReference>
<dbReference type="PANTHER" id="PTHR10938:SF0">
    <property type="entry name" value="TRANSLATION INITIATION FACTOR IF-3, MITOCHONDRIAL"/>
    <property type="match status" value="1"/>
</dbReference>
<dbReference type="Pfam" id="PF00707">
    <property type="entry name" value="IF3_C"/>
    <property type="match status" value="1"/>
</dbReference>
<dbReference type="Pfam" id="PF05198">
    <property type="entry name" value="IF3_N"/>
    <property type="match status" value="1"/>
</dbReference>
<dbReference type="SUPFAM" id="SSF55200">
    <property type="entry name" value="Translation initiation factor IF3, C-terminal domain"/>
    <property type="match status" value="1"/>
</dbReference>
<dbReference type="SUPFAM" id="SSF54364">
    <property type="entry name" value="Translation initiation factor IF3, N-terminal domain"/>
    <property type="match status" value="1"/>
</dbReference>
<dbReference type="PROSITE" id="PS00938">
    <property type="entry name" value="IF3"/>
    <property type="match status" value="1"/>
</dbReference>
<evidence type="ECO:0000255" key="1">
    <source>
        <dbReference type="HAMAP-Rule" id="MF_00080"/>
    </source>
</evidence>